<feature type="propeptide" id="PRO_0000031129" evidence="1">
    <location>
        <begin position="1"/>
        <end position="2"/>
    </location>
</feature>
<feature type="chain" id="PRO_0000031130" description="Ribulose bisphosphate carboxylase large chain">
    <location>
        <begin position="3"/>
        <end position="475"/>
    </location>
</feature>
<feature type="active site" description="Proton acceptor" evidence="1">
    <location>
        <position position="175"/>
    </location>
</feature>
<feature type="active site" description="Proton acceptor" evidence="1">
    <location>
        <position position="294"/>
    </location>
</feature>
<feature type="binding site" description="in homodimeric partner" evidence="1">
    <location>
        <position position="123"/>
    </location>
    <ligand>
        <name>substrate</name>
    </ligand>
</feature>
<feature type="binding site" evidence="1">
    <location>
        <position position="173"/>
    </location>
    <ligand>
        <name>substrate</name>
    </ligand>
</feature>
<feature type="binding site" evidence="1">
    <location>
        <position position="177"/>
    </location>
    <ligand>
        <name>substrate</name>
    </ligand>
</feature>
<feature type="binding site" description="via carbamate group" evidence="1">
    <location>
        <position position="201"/>
    </location>
    <ligand>
        <name>Mg(2+)</name>
        <dbReference type="ChEBI" id="CHEBI:18420"/>
    </ligand>
</feature>
<feature type="binding site" evidence="1">
    <location>
        <position position="203"/>
    </location>
    <ligand>
        <name>Mg(2+)</name>
        <dbReference type="ChEBI" id="CHEBI:18420"/>
    </ligand>
</feature>
<feature type="binding site" evidence="1">
    <location>
        <position position="204"/>
    </location>
    <ligand>
        <name>Mg(2+)</name>
        <dbReference type="ChEBI" id="CHEBI:18420"/>
    </ligand>
</feature>
<feature type="binding site" evidence="1">
    <location>
        <position position="295"/>
    </location>
    <ligand>
        <name>substrate</name>
    </ligand>
</feature>
<feature type="binding site" evidence="1">
    <location>
        <position position="327"/>
    </location>
    <ligand>
        <name>substrate</name>
    </ligand>
</feature>
<feature type="binding site" evidence="1">
    <location>
        <position position="379"/>
    </location>
    <ligand>
        <name>substrate</name>
    </ligand>
</feature>
<feature type="site" description="Transition state stabilizer" evidence="1">
    <location>
        <position position="334"/>
    </location>
</feature>
<feature type="modified residue" description="N-acetylproline" evidence="1">
    <location>
        <position position="3"/>
    </location>
</feature>
<feature type="modified residue" description="N6,N6,N6-trimethyllysine" evidence="1">
    <location>
        <position position="14"/>
    </location>
</feature>
<feature type="modified residue" description="N6-carboxylysine" evidence="1">
    <location>
        <position position="201"/>
    </location>
</feature>
<feature type="disulfide bond" description="Interchain; in linked form" evidence="1">
    <location>
        <position position="247"/>
    </location>
</feature>
<geneLocation type="chloroplast"/>
<gene>
    <name evidence="1" type="primary">rbcL</name>
</gene>
<name>RBL_ATRRS</name>
<dbReference type="EC" id="4.1.1.39" evidence="1"/>
<dbReference type="EMBL" id="X55831">
    <property type="protein sequence ID" value="CAA39357.1"/>
    <property type="molecule type" value="Genomic_DNA"/>
</dbReference>
<dbReference type="PIR" id="F34921">
    <property type="entry name" value="F34921"/>
</dbReference>
<dbReference type="SMR" id="P20455"/>
<dbReference type="GO" id="GO:0009507">
    <property type="term" value="C:chloroplast"/>
    <property type="evidence" value="ECO:0007669"/>
    <property type="project" value="UniProtKB-SubCell"/>
</dbReference>
<dbReference type="GO" id="GO:0000287">
    <property type="term" value="F:magnesium ion binding"/>
    <property type="evidence" value="ECO:0007669"/>
    <property type="project" value="UniProtKB-UniRule"/>
</dbReference>
<dbReference type="GO" id="GO:0004497">
    <property type="term" value="F:monooxygenase activity"/>
    <property type="evidence" value="ECO:0007669"/>
    <property type="project" value="UniProtKB-KW"/>
</dbReference>
<dbReference type="GO" id="GO:0016984">
    <property type="term" value="F:ribulose-bisphosphate carboxylase activity"/>
    <property type="evidence" value="ECO:0007669"/>
    <property type="project" value="UniProtKB-UniRule"/>
</dbReference>
<dbReference type="GO" id="GO:0009853">
    <property type="term" value="P:photorespiration"/>
    <property type="evidence" value="ECO:0007669"/>
    <property type="project" value="UniProtKB-KW"/>
</dbReference>
<dbReference type="GO" id="GO:0019253">
    <property type="term" value="P:reductive pentose-phosphate cycle"/>
    <property type="evidence" value="ECO:0007669"/>
    <property type="project" value="UniProtKB-UniRule"/>
</dbReference>
<dbReference type="CDD" id="cd08212">
    <property type="entry name" value="RuBisCO_large_I"/>
    <property type="match status" value="1"/>
</dbReference>
<dbReference type="FunFam" id="3.20.20.110:FF:000001">
    <property type="entry name" value="Ribulose bisphosphate carboxylase large chain"/>
    <property type="match status" value="1"/>
</dbReference>
<dbReference type="FunFam" id="3.30.70.150:FF:000001">
    <property type="entry name" value="Ribulose bisphosphate carboxylase large chain"/>
    <property type="match status" value="1"/>
</dbReference>
<dbReference type="Gene3D" id="3.20.20.110">
    <property type="entry name" value="Ribulose bisphosphate carboxylase, large subunit, C-terminal domain"/>
    <property type="match status" value="1"/>
</dbReference>
<dbReference type="Gene3D" id="3.30.70.150">
    <property type="entry name" value="RuBisCO large subunit, N-terminal domain"/>
    <property type="match status" value="1"/>
</dbReference>
<dbReference type="HAMAP" id="MF_01338">
    <property type="entry name" value="RuBisCO_L_type1"/>
    <property type="match status" value="1"/>
</dbReference>
<dbReference type="InterPro" id="IPR033966">
    <property type="entry name" value="RuBisCO"/>
</dbReference>
<dbReference type="InterPro" id="IPR020878">
    <property type="entry name" value="RuBisCo_large_chain_AS"/>
</dbReference>
<dbReference type="InterPro" id="IPR000685">
    <property type="entry name" value="RuBisCO_lsu_C"/>
</dbReference>
<dbReference type="InterPro" id="IPR036376">
    <property type="entry name" value="RuBisCO_lsu_C_sf"/>
</dbReference>
<dbReference type="InterPro" id="IPR017443">
    <property type="entry name" value="RuBisCO_lsu_fd_N"/>
</dbReference>
<dbReference type="InterPro" id="IPR036422">
    <property type="entry name" value="RuBisCO_lsu_N_sf"/>
</dbReference>
<dbReference type="InterPro" id="IPR020888">
    <property type="entry name" value="RuBisCO_lsuI"/>
</dbReference>
<dbReference type="NCBIfam" id="NF003252">
    <property type="entry name" value="PRK04208.1"/>
    <property type="match status" value="1"/>
</dbReference>
<dbReference type="PANTHER" id="PTHR42704">
    <property type="entry name" value="RIBULOSE BISPHOSPHATE CARBOXYLASE"/>
    <property type="match status" value="1"/>
</dbReference>
<dbReference type="PANTHER" id="PTHR42704:SF15">
    <property type="entry name" value="RIBULOSE BISPHOSPHATE CARBOXYLASE LARGE CHAIN"/>
    <property type="match status" value="1"/>
</dbReference>
<dbReference type="Pfam" id="PF00016">
    <property type="entry name" value="RuBisCO_large"/>
    <property type="match status" value="1"/>
</dbReference>
<dbReference type="Pfam" id="PF02788">
    <property type="entry name" value="RuBisCO_large_N"/>
    <property type="match status" value="1"/>
</dbReference>
<dbReference type="SFLD" id="SFLDG01052">
    <property type="entry name" value="RuBisCO"/>
    <property type="match status" value="1"/>
</dbReference>
<dbReference type="SFLD" id="SFLDS00014">
    <property type="entry name" value="RuBisCO"/>
    <property type="match status" value="1"/>
</dbReference>
<dbReference type="SFLD" id="SFLDG00301">
    <property type="entry name" value="RuBisCO-like_proteins"/>
    <property type="match status" value="1"/>
</dbReference>
<dbReference type="SUPFAM" id="SSF51649">
    <property type="entry name" value="RuBisCo, C-terminal domain"/>
    <property type="match status" value="1"/>
</dbReference>
<dbReference type="SUPFAM" id="SSF54966">
    <property type="entry name" value="RuBisCO, large subunit, small (N-terminal) domain"/>
    <property type="match status" value="1"/>
</dbReference>
<dbReference type="PROSITE" id="PS00157">
    <property type="entry name" value="RUBISCO_LARGE"/>
    <property type="match status" value="1"/>
</dbReference>
<organism>
    <name type="scientific">Atriplex rosea</name>
    <name type="common">Red orache</name>
    <name type="synonym">Tumbling saltweed</name>
    <dbReference type="NCBI Taxonomy" id="3552"/>
    <lineage>
        <taxon>Eukaryota</taxon>
        <taxon>Viridiplantae</taxon>
        <taxon>Streptophyta</taxon>
        <taxon>Embryophyta</taxon>
        <taxon>Tracheophyta</taxon>
        <taxon>Spermatophyta</taxon>
        <taxon>Magnoliopsida</taxon>
        <taxon>eudicotyledons</taxon>
        <taxon>Gunneridae</taxon>
        <taxon>Pentapetalae</taxon>
        <taxon>Caryophyllales</taxon>
        <taxon>Chenopodiaceae</taxon>
        <taxon>Chenopodioideae</taxon>
        <taxon>Atripliceae</taxon>
        <taxon>Atriplex</taxon>
    </lineage>
</organism>
<comment type="function">
    <text evidence="1">RuBisCO catalyzes two reactions: the carboxylation of D-ribulose 1,5-bisphosphate, the primary event in carbon dioxide fixation, as well as the oxidative fragmentation of the pentose substrate in the photorespiration process. Both reactions occur simultaneously and in competition at the same active site.</text>
</comment>
<comment type="catalytic activity">
    <reaction evidence="1">
        <text>2 (2R)-3-phosphoglycerate + 2 H(+) = D-ribulose 1,5-bisphosphate + CO2 + H2O</text>
        <dbReference type="Rhea" id="RHEA:23124"/>
        <dbReference type="ChEBI" id="CHEBI:15377"/>
        <dbReference type="ChEBI" id="CHEBI:15378"/>
        <dbReference type="ChEBI" id="CHEBI:16526"/>
        <dbReference type="ChEBI" id="CHEBI:57870"/>
        <dbReference type="ChEBI" id="CHEBI:58272"/>
        <dbReference type="EC" id="4.1.1.39"/>
    </reaction>
</comment>
<comment type="catalytic activity">
    <reaction evidence="1">
        <text>D-ribulose 1,5-bisphosphate + O2 = 2-phosphoglycolate + (2R)-3-phosphoglycerate + 2 H(+)</text>
        <dbReference type="Rhea" id="RHEA:36631"/>
        <dbReference type="ChEBI" id="CHEBI:15378"/>
        <dbReference type="ChEBI" id="CHEBI:15379"/>
        <dbReference type="ChEBI" id="CHEBI:57870"/>
        <dbReference type="ChEBI" id="CHEBI:58033"/>
        <dbReference type="ChEBI" id="CHEBI:58272"/>
    </reaction>
</comment>
<comment type="cofactor">
    <cofactor evidence="1">
        <name>Mg(2+)</name>
        <dbReference type="ChEBI" id="CHEBI:18420"/>
    </cofactor>
    <text evidence="1">Binds 1 Mg(2+) ion per subunit.</text>
</comment>
<comment type="subunit">
    <text evidence="1">Heterohexadecamer of 8 large chains and 8 small chains; disulfide-linked. The disulfide link is formed within the large subunit homodimers.</text>
</comment>
<comment type="subcellular location">
    <subcellularLocation>
        <location>Plastid</location>
        <location>Chloroplast</location>
    </subcellularLocation>
</comment>
<comment type="PTM">
    <text evidence="1">The disulfide bond which can form in the large chain dimeric partners within the hexadecamer appears to be associated with oxidative stress and protein turnover.</text>
</comment>
<comment type="miscellaneous">
    <text evidence="1">The basic functional RuBisCO is composed of a large chain homodimer in a 'head-to-tail' conformation. In form I RuBisCO this homodimer is arranged in a barrel-like tetramer with the small subunits forming a tetrameric 'cap' on each end of the 'barrel'.</text>
</comment>
<comment type="similarity">
    <text evidence="1">Belongs to the RuBisCO large chain family. Type I subfamily.</text>
</comment>
<protein>
    <recommendedName>
        <fullName evidence="1">Ribulose bisphosphate carboxylase large chain</fullName>
        <shortName evidence="1">RuBisCO large subunit</shortName>
        <ecNumber evidence="1">4.1.1.39</ecNumber>
    </recommendedName>
</protein>
<sequence length="475" mass="52632">MSPQTETKANVGFKAGVKDYKLTYYTPEYETLDTDILAAFRVSPQPGVPPEEAGAAVAAESSTGTWTTVWTDGLTSLDRYKGRCYHIEPVAGEENQYICYVAYPLDLFEEGSVTNMFTSIVGNVFGFKALRALRLEDLRIPVAYVKTFQGPPHGIQVERDKLNKYGRPLLGCTIKPKLGLSAKNYGRAVYEVLRGGLDFTKDDENVNSQPFMRWRDRFLFCAEALYKAQAETGEIKGHYLNATAGTCEDMMKRAVFARELGVPIVMHDYLTGGFTANTTLSHYCRDNGLLLHIHRAMHAVIDRQKNHGIHFRVLAKALRLSGGDHIHSGTVVGKLEGERDITLGFVDLLRDDYTEKDRSRGIYFSQSWVSTPGVLPVASGGIHVWHMPALTEIFGDDSVLQFGGGTLGHPWGNAPGAVANRVALEACVQARNEGRDLAREGNTIIREASKWSPELAAACEIWKEIKFEFPAMDTV</sequence>
<proteinExistence type="inferred from homology"/>
<accession>P20455</accession>
<evidence type="ECO:0000255" key="1">
    <source>
        <dbReference type="HAMAP-Rule" id="MF_01338"/>
    </source>
</evidence>
<reference key="1">
    <citation type="journal article" date="1990" name="J. Biol. Chem.">
        <title>Comparisons of rbcL genes for the large subunit of ribulose-bisphosphate carboxylase from closely related C3 and C4 plant species.</title>
        <authorList>
            <person name="Hudson G.S."/>
            <person name="Mahon J.D."/>
            <person name="Anderson P.A."/>
            <person name="Gibbs M.J."/>
            <person name="Badger M.R."/>
            <person name="Andrews T.J."/>
            <person name="Whitfeld P.R."/>
        </authorList>
    </citation>
    <scope>NUCLEOTIDE SEQUENCE [GENOMIC DNA]</scope>
</reference>
<keyword id="KW-0007">Acetylation</keyword>
<keyword id="KW-0113">Calvin cycle</keyword>
<keyword id="KW-0120">Carbon dioxide fixation</keyword>
<keyword id="KW-0150">Chloroplast</keyword>
<keyword id="KW-1015">Disulfide bond</keyword>
<keyword id="KW-0456">Lyase</keyword>
<keyword id="KW-0460">Magnesium</keyword>
<keyword id="KW-0479">Metal-binding</keyword>
<keyword id="KW-0488">Methylation</keyword>
<keyword id="KW-0503">Monooxygenase</keyword>
<keyword id="KW-0560">Oxidoreductase</keyword>
<keyword id="KW-0601">Photorespiration</keyword>
<keyword id="KW-0602">Photosynthesis</keyword>
<keyword id="KW-0934">Plastid</keyword>